<feature type="chain" id="PRO_0000341790" description="2-succinyl-5-enolpyruvyl-6-hydroxy-3-cyclohexene-1-carboxylate synthase">
    <location>
        <begin position="1"/>
        <end position="545"/>
    </location>
</feature>
<proteinExistence type="inferred from homology"/>
<organism>
    <name type="scientific">Nocardia farcinica (strain IFM 10152)</name>
    <dbReference type="NCBI Taxonomy" id="247156"/>
    <lineage>
        <taxon>Bacteria</taxon>
        <taxon>Bacillati</taxon>
        <taxon>Actinomycetota</taxon>
        <taxon>Actinomycetes</taxon>
        <taxon>Mycobacteriales</taxon>
        <taxon>Nocardiaceae</taxon>
        <taxon>Nocardia</taxon>
    </lineage>
</organism>
<sequence length="545" mass="56577">MNPSTAQARVVVDELVRGGVRDVVLCPGSRNAPLAFALQAADAAGRLRLHMRIDERTAGFLAIGLAISAGAPVPVVMTSGTAVANLGPAVLEANYARVPLIVLSANRPYEMLGTGANQTVEQLGLFGSQVRATISLGLAEADGAGAGSYDQQNSVWRSAVCRVLAAARGTRSGNAGPVHFDIPLREPLVPDLAEGEAEPAGRAGGAPWTATQYATLDVPLEIDLTPDTVVVSGHGAGLRPELAHLPTVAEPTAPMHGPALHPLALPLLTPRQAIITGRPTLHRQVSRLLADPAVTVYALTTGPRWPDVSGNVVGTGTRAVTSGGPRPEWLAHCRELDEKARQVVRAELAGHPKPTGLHVAAVVMDALREGDQLLLGASNPVRDAALVATPRPGVRVLSNRGVAGIDGTVSTAVGAALAHPGRTIALIGDLTFLHDAAGLLIGRGEPRPADLTIVVANDDGGGIFELLEQGDPQYAGVFERVFGTPHGMDLAALCAAYRIPHRQVDPAELAAELAGDAHGLRVLEVITERSSLRELHATVRAKIAP</sequence>
<dbReference type="EC" id="2.2.1.9" evidence="1"/>
<dbReference type="EMBL" id="AP006618">
    <property type="protein sequence ID" value="BAD59985.1"/>
    <property type="molecule type" value="Genomic_DNA"/>
</dbReference>
<dbReference type="RefSeq" id="WP_011211667.1">
    <property type="nucleotide sequence ID" value="NC_006361.1"/>
</dbReference>
<dbReference type="SMR" id="Q5YPA6"/>
<dbReference type="STRING" id="247156.NFA_51330"/>
<dbReference type="GeneID" id="61135711"/>
<dbReference type="KEGG" id="nfa:NFA_51330"/>
<dbReference type="eggNOG" id="COG1165">
    <property type="taxonomic scope" value="Bacteria"/>
</dbReference>
<dbReference type="HOGENOM" id="CLU_006051_4_0_11"/>
<dbReference type="OrthoDB" id="9791859at2"/>
<dbReference type="UniPathway" id="UPA00079"/>
<dbReference type="UniPathway" id="UPA01057">
    <property type="reaction ID" value="UER00164"/>
</dbReference>
<dbReference type="Proteomes" id="UP000006820">
    <property type="component" value="Chromosome"/>
</dbReference>
<dbReference type="GO" id="GO:0070204">
    <property type="term" value="F:2-succinyl-5-enolpyruvyl-6-hydroxy-3-cyclohexene-1-carboxylic-acid synthase activity"/>
    <property type="evidence" value="ECO:0007669"/>
    <property type="project" value="UniProtKB-UniRule"/>
</dbReference>
<dbReference type="GO" id="GO:0000287">
    <property type="term" value="F:magnesium ion binding"/>
    <property type="evidence" value="ECO:0007669"/>
    <property type="project" value="UniProtKB-UniRule"/>
</dbReference>
<dbReference type="GO" id="GO:0030145">
    <property type="term" value="F:manganese ion binding"/>
    <property type="evidence" value="ECO:0007669"/>
    <property type="project" value="UniProtKB-UniRule"/>
</dbReference>
<dbReference type="GO" id="GO:0030976">
    <property type="term" value="F:thiamine pyrophosphate binding"/>
    <property type="evidence" value="ECO:0007669"/>
    <property type="project" value="UniProtKB-UniRule"/>
</dbReference>
<dbReference type="GO" id="GO:0009234">
    <property type="term" value="P:menaquinone biosynthetic process"/>
    <property type="evidence" value="ECO:0007669"/>
    <property type="project" value="UniProtKB-UniRule"/>
</dbReference>
<dbReference type="CDD" id="cd07037">
    <property type="entry name" value="TPP_PYR_MenD"/>
    <property type="match status" value="1"/>
</dbReference>
<dbReference type="CDD" id="cd02009">
    <property type="entry name" value="TPP_SHCHC_synthase"/>
    <property type="match status" value="1"/>
</dbReference>
<dbReference type="Gene3D" id="3.40.50.970">
    <property type="match status" value="2"/>
</dbReference>
<dbReference type="Gene3D" id="3.40.50.1220">
    <property type="entry name" value="TPP-binding domain"/>
    <property type="match status" value="1"/>
</dbReference>
<dbReference type="HAMAP" id="MF_01659">
    <property type="entry name" value="MenD"/>
    <property type="match status" value="1"/>
</dbReference>
<dbReference type="InterPro" id="IPR004433">
    <property type="entry name" value="MenaQ_synth_MenD"/>
</dbReference>
<dbReference type="InterPro" id="IPR029061">
    <property type="entry name" value="THDP-binding"/>
</dbReference>
<dbReference type="InterPro" id="IPR012001">
    <property type="entry name" value="Thiamin_PyroP_enz_TPP-bd_dom"/>
</dbReference>
<dbReference type="InterPro" id="IPR011766">
    <property type="entry name" value="TPP_enzyme_TPP-bd"/>
</dbReference>
<dbReference type="NCBIfam" id="TIGR00173">
    <property type="entry name" value="menD"/>
    <property type="match status" value="1"/>
</dbReference>
<dbReference type="PANTHER" id="PTHR42916">
    <property type="entry name" value="2-SUCCINYL-5-ENOLPYRUVYL-6-HYDROXY-3-CYCLOHEXENE-1-CARBOXYLATE SYNTHASE"/>
    <property type="match status" value="1"/>
</dbReference>
<dbReference type="PANTHER" id="PTHR42916:SF1">
    <property type="entry name" value="PROTEIN PHYLLO, CHLOROPLASTIC"/>
    <property type="match status" value="1"/>
</dbReference>
<dbReference type="Pfam" id="PF02775">
    <property type="entry name" value="TPP_enzyme_C"/>
    <property type="match status" value="1"/>
</dbReference>
<dbReference type="Pfam" id="PF02776">
    <property type="entry name" value="TPP_enzyme_N"/>
    <property type="match status" value="1"/>
</dbReference>
<dbReference type="PIRSF" id="PIRSF004983">
    <property type="entry name" value="MenD"/>
    <property type="match status" value="1"/>
</dbReference>
<dbReference type="SUPFAM" id="SSF52518">
    <property type="entry name" value="Thiamin diphosphate-binding fold (THDP-binding)"/>
    <property type="match status" value="2"/>
</dbReference>
<name>MEND_NOCFA</name>
<reference key="1">
    <citation type="journal article" date="2004" name="Proc. Natl. Acad. Sci. U.S.A.">
        <title>The complete genomic sequence of Nocardia farcinica IFM 10152.</title>
        <authorList>
            <person name="Ishikawa J."/>
            <person name="Yamashita A."/>
            <person name="Mikami Y."/>
            <person name="Hoshino Y."/>
            <person name="Kurita H."/>
            <person name="Hotta K."/>
            <person name="Shiba T."/>
            <person name="Hattori M."/>
        </authorList>
    </citation>
    <scope>NUCLEOTIDE SEQUENCE [LARGE SCALE GENOMIC DNA]</scope>
    <source>
        <strain>IFM 10152</strain>
    </source>
</reference>
<comment type="function">
    <text evidence="1">Catalyzes the thiamine diphosphate-dependent decarboxylation of 2-oxoglutarate and the subsequent addition of the resulting succinic semialdehyde-thiamine pyrophosphate anion to isochorismate to yield 2-succinyl-5-enolpyruvyl-6-hydroxy-3-cyclohexene-1-carboxylate (SEPHCHC).</text>
</comment>
<comment type="catalytic activity">
    <reaction evidence="1">
        <text>isochorismate + 2-oxoglutarate + H(+) = 5-enolpyruvoyl-6-hydroxy-2-succinyl-cyclohex-3-ene-1-carboxylate + CO2</text>
        <dbReference type="Rhea" id="RHEA:25593"/>
        <dbReference type="ChEBI" id="CHEBI:15378"/>
        <dbReference type="ChEBI" id="CHEBI:16526"/>
        <dbReference type="ChEBI" id="CHEBI:16810"/>
        <dbReference type="ChEBI" id="CHEBI:29780"/>
        <dbReference type="ChEBI" id="CHEBI:58818"/>
        <dbReference type="EC" id="2.2.1.9"/>
    </reaction>
</comment>
<comment type="cofactor">
    <cofactor evidence="1">
        <name>Mg(2+)</name>
        <dbReference type="ChEBI" id="CHEBI:18420"/>
    </cofactor>
    <cofactor evidence="1">
        <name>Mn(2+)</name>
        <dbReference type="ChEBI" id="CHEBI:29035"/>
    </cofactor>
</comment>
<comment type="cofactor">
    <cofactor evidence="1">
        <name>thiamine diphosphate</name>
        <dbReference type="ChEBI" id="CHEBI:58937"/>
    </cofactor>
    <text evidence="1">Binds 1 thiamine pyrophosphate per subunit.</text>
</comment>
<comment type="pathway">
    <text evidence="1">Quinol/quinone metabolism; 1,4-dihydroxy-2-naphthoate biosynthesis; 1,4-dihydroxy-2-naphthoate from chorismate: step 2/7.</text>
</comment>
<comment type="pathway">
    <text evidence="1">Quinol/quinone metabolism; menaquinone biosynthesis.</text>
</comment>
<comment type="subunit">
    <text evidence="1">Homodimer.</text>
</comment>
<comment type="similarity">
    <text evidence="1">Belongs to the TPP enzyme family. MenD subfamily.</text>
</comment>
<keyword id="KW-0460">Magnesium</keyword>
<keyword id="KW-0464">Manganese</keyword>
<keyword id="KW-0474">Menaquinone biosynthesis</keyword>
<keyword id="KW-0479">Metal-binding</keyword>
<keyword id="KW-1185">Reference proteome</keyword>
<keyword id="KW-0786">Thiamine pyrophosphate</keyword>
<keyword id="KW-0808">Transferase</keyword>
<gene>
    <name evidence="1" type="primary">menD</name>
    <name type="ordered locus">NFA_51330</name>
</gene>
<evidence type="ECO:0000255" key="1">
    <source>
        <dbReference type="HAMAP-Rule" id="MF_01659"/>
    </source>
</evidence>
<protein>
    <recommendedName>
        <fullName evidence="1">2-succinyl-5-enolpyruvyl-6-hydroxy-3-cyclohexene-1-carboxylate synthase</fullName>
        <shortName evidence="1">SEPHCHC synthase</shortName>
        <ecNumber evidence="1">2.2.1.9</ecNumber>
    </recommendedName>
    <alternativeName>
        <fullName evidence="1">Menaquinone biosynthesis protein MenD</fullName>
    </alternativeName>
</protein>
<accession>Q5YPA6</accession>